<proteinExistence type="evidence at protein level"/>
<sequence length="32" mass="3558">VFCRSNGQQCTSDGQCCYGKCMTAFMGKICMR</sequence>
<feature type="peptide" id="PRO_0000044973" description="U13-ctenitoxin-Pn1a">
    <location>
        <begin position="1"/>
        <end position="32"/>
    </location>
</feature>
<feature type="disulfide bond" evidence="1">
    <location>
        <begin position="3"/>
        <end position="17"/>
    </location>
</feature>
<feature type="disulfide bond" evidence="1">
    <location>
        <begin position="10"/>
        <end position="21"/>
    </location>
</feature>
<feature type="disulfide bond" evidence="1">
    <location>
        <begin position="16"/>
        <end position="30"/>
    </location>
</feature>
<evidence type="ECO:0000250" key="1"/>
<evidence type="ECO:0000269" key="2">
    <source>
    </source>
</evidence>
<evidence type="ECO:0000305" key="3"/>
<dbReference type="SMR" id="P83894"/>
<dbReference type="ArachnoServer" id="AS000212">
    <property type="toxin name" value="U13-ctenitoxin-Pn1a"/>
</dbReference>
<dbReference type="GO" id="GO:0005576">
    <property type="term" value="C:extracellular region"/>
    <property type="evidence" value="ECO:0007669"/>
    <property type="project" value="UniProtKB-SubCell"/>
</dbReference>
<dbReference type="GO" id="GO:0090729">
    <property type="term" value="F:toxin activity"/>
    <property type="evidence" value="ECO:0007669"/>
    <property type="project" value="UniProtKB-KW"/>
</dbReference>
<dbReference type="InterPro" id="IPR012634">
    <property type="entry name" value="Toxin_29"/>
</dbReference>
<dbReference type="Pfam" id="PF08116">
    <property type="entry name" value="Toxin_29"/>
    <property type="match status" value="1"/>
</dbReference>
<reference key="1">
    <citation type="journal article" date="2006" name="Comp. Biochem. Physiol.">
        <title>Comparison of the partial proteomes of the venoms of Brazilian spiders of the genus Phoneutria.</title>
        <authorList>
            <person name="Richardson M."/>
            <person name="Pimenta A.M."/>
            <person name="Bemquerer M.P."/>
            <person name="Santoro M.M."/>
            <person name="Beirao P.S."/>
            <person name="Lima M.E."/>
            <person name="Figueiredo S.G."/>
            <person name="Bloch C. Jr."/>
            <person name="Vasconcelos E.A."/>
            <person name="Campos F.A."/>
            <person name="Gomes P.C."/>
            <person name="Cordeiro M.N."/>
        </authorList>
    </citation>
    <scope>PROTEIN SEQUENCE</scope>
    <scope>SUBCELLULAR LOCATION</scope>
    <scope>TISSUE SPECIFICITY</scope>
    <scope>MASS SPECTROMETRY</scope>
    <source>
        <tissue>Venom</tissue>
    </source>
</reference>
<accession>P83894</accession>
<name>TX13_PHONI</name>
<keyword id="KW-0903">Direct protein sequencing</keyword>
<keyword id="KW-1015">Disulfide bond</keyword>
<keyword id="KW-0960">Knottin</keyword>
<keyword id="KW-0528">Neurotoxin</keyword>
<keyword id="KW-0964">Secreted</keyword>
<keyword id="KW-0800">Toxin</keyword>
<organism evidence="3">
    <name type="scientific">Phoneutria nigriventer</name>
    <name type="common">Brazilian armed spider</name>
    <name type="synonym">Ctenus nigriventer</name>
    <dbReference type="NCBI Taxonomy" id="6918"/>
    <lineage>
        <taxon>Eukaryota</taxon>
        <taxon>Metazoa</taxon>
        <taxon>Ecdysozoa</taxon>
        <taxon>Arthropoda</taxon>
        <taxon>Chelicerata</taxon>
        <taxon>Arachnida</taxon>
        <taxon>Araneae</taxon>
        <taxon>Araneomorphae</taxon>
        <taxon>Entelegynae</taxon>
        <taxon>Lycosoidea</taxon>
        <taxon>Ctenidae</taxon>
        <taxon>Phoneutria</taxon>
    </lineage>
</organism>
<comment type="function">
    <text evidence="3">Acts as a neurotoxin.</text>
</comment>
<comment type="subcellular location">
    <subcellularLocation>
        <location evidence="2 3">Secreted</location>
    </subcellularLocation>
</comment>
<comment type="tissue specificity">
    <text evidence="2 3">Expressed by the venom gland.</text>
</comment>
<comment type="domain">
    <text evidence="1">The presence of a 'disulfide through disulfide knot' structurally defines this protein as a knottin.</text>
</comment>
<comment type="mass spectrometry" mass="3549.5" method="Electrospray" evidence="2 3"/>
<comment type="similarity">
    <text evidence="3">Belongs to the neurotoxin 17 (21C2) family.</text>
</comment>
<protein>
    <recommendedName>
        <fullName>U13-ctenitoxin-Pn1a</fullName>
        <shortName>U13-CNTX-Pn1a</shortName>
    </recommendedName>
    <alternativeName>
        <fullName>Neurotoxin PNTx13C3</fullName>
    </alternativeName>
</protein>